<reference key="1">
    <citation type="journal article" date="2004" name="J. Bacteriol.">
        <title>Comparative genomics of two Leptospira interrogans serovars reveals novel insights into physiology and pathogenesis.</title>
        <authorList>
            <person name="Nascimento A.L.T.O."/>
            <person name="Ko A.I."/>
            <person name="Martins E.A.L."/>
            <person name="Monteiro-Vitorello C.B."/>
            <person name="Ho P.L."/>
            <person name="Haake D.A."/>
            <person name="Verjovski-Almeida S."/>
            <person name="Hartskeerl R.A."/>
            <person name="Marques M.V."/>
            <person name="Oliveira M.C."/>
            <person name="Menck C.F.M."/>
            <person name="Leite L.C.C."/>
            <person name="Carrer H."/>
            <person name="Coutinho L.L."/>
            <person name="Degrave W.M."/>
            <person name="Dellagostin O.A."/>
            <person name="El-Dorry H."/>
            <person name="Ferro E.S."/>
            <person name="Ferro M.I.T."/>
            <person name="Furlan L.R."/>
            <person name="Gamberini M."/>
            <person name="Giglioti E.A."/>
            <person name="Goes-Neto A."/>
            <person name="Goldman G.H."/>
            <person name="Goldman M.H.S."/>
            <person name="Harakava R."/>
            <person name="Jeronimo S.M.B."/>
            <person name="Junqueira-de-Azevedo I.L.M."/>
            <person name="Kimura E.T."/>
            <person name="Kuramae E.E."/>
            <person name="Lemos E.G.M."/>
            <person name="Lemos M.V.F."/>
            <person name="Marino C.L."/>
            <person name="Nunes L.R."/>
            <person name="de Oliveira R.C."/>
            <person name="Pereira G.G."/>
            <person name="Reis M.S."/>
            <person name="Schriefer A."/>
            <person name="Siqueira W.J."/>
            <person name="Sommer P."/>
            <person name="Tsai S.M."/>
            <person name="Simpson A.J.G."/>
            <person name="Ferro J.A."/>
            <person name="Camargo L.E.A."/>
            <person name="Kitajima J.P."/>
            <person name="Setubal J.C."/>
            <person name="Van Sluys M.A."/>
        </authorList>
    </citation>
    <scope>NUCLEOTIDE SEQUENCE [LARGE SCALE GENOMIC DNA]</scope>
    <source>
        <strain>Fiocruz L1-130</strain>
    </source>
</reference>
<organism>
    <name type="scientific">Leptospira interrogans serogroup Icterohaemorrhagiae serovar copenhageni (strain Fiocruz L1-130)</name>
    <dbReference type="NCBI Taxonomy" id="267671"/>
    <lineage>
        <taxon>Bacteria</taxon>
        <taxon>Pseudomonadati</taxon>
        <taxon>Spirochaetota</taxon>
        <taxon>Spirochaetia</taxon>
        <taxon>Leptospirales</taxon>
        <taxon>Leptospiraceae</taxon>
        <taxon>Leptospira</taxon>
    </lineage>
</organism>
<name>ARGJ_LEPIC</name>
<dbReference type="EC" id="2.3.1.35" evidence="1"/>
<dbReference type="EC" id="2.3.1.1" evidence="1"/>
<dbReference type="EMBL" id="AE016823">
    <property type="protein sequence ID" value="AAS71815.1"/>
    <property type="molecule type" value="Genomic_DNA"/>
</dbReference>
<dbReference type="SMR" id="P62062"/>
<dbReference type="KEGG" id="lic:LIC_13271"/>
<dbReference type="HOGENOM" id="CLU_027172_1_0_12"/>
<dbReference type="UniPathway" id="UPA00068">
    <property type="reaction ID" value="UER00106"/>
</dbReference>
<dbReference type="UniPathway" id="UPA00068">
    <property type="reaction ID" value="UER00111"/>
</dbReference>
<dbReference type="Proteomes" id="UP000007037">
    <property type="component" value="Chromosome I"/>
</dbReference>
<dbReference type="GO" id="GO:0005737">
    <property type="term" value="C:cytoplasm"/>
    <property type="evidence" value="ECO:0007669"/>
    <property type="project" value="UniProtKB-SubCell"/>
</dbReference>
<dbReference type="GO" id="GO:0004358">
    <property type="term" value="F:glutamate N-acetyltransferase activity"/>
    <property type="evidence" value="ECO:0007669"/>
    <property type="project" value="UniProtKB-UniRule"/>
</dbReference>
<dbReference type="GO" id="GO:0004042">
    <property type="term" value="F:L-glutamate N-acetyltransferase activity"/>
    <property type="evidence" value="ECO:0007669"/>
    <property type="project" value="UniProtKB-UniRule"/>
</dbReference>
<dbReference type="GO" id="GO:0006526">
    <property type="term" value="P:L-arginine biosynthetic process"/>
    <property type="evidence" value="ECO:0007669"/>
    <property type="project" value="UniProtKB-UniRule"/>
</dbReference>
<dbReference type="GO" id="GO:0006592">
    <property type="term" value="P:ornithine biosynthetic process"/>
    <property type="evidence" value="ECO:0007669"/>
    <property type="project" value="TreeGrafter"/>
</dbReference>
<dbReference type="CDD" id="cd02152">
    <property type="entry name" value="OAT"/>
    <property type="match status" value="1"/>
</dbReference>
<dbReference type="FunFam" id="3.10.20.340:FF:000003">
    <property type="entry name" value="Arginine biosynthesis bifunctional protein ArgJ"/>
    <property type="match status" value="1"/>
</dbReference>
<dbReference type="FunFam" id="3.60.70.12:FF:000001">
    <property type="entry name" value="Arginine biosynthesis bifunctional protein ArgJ, chloroplastic"/>
    <property type="match status" value="1"/>
</dbReference>
<dbReference type="Gene3D" id="3.10.20.340">
    <property type="entry name" value="ArgJ beta chain, C-terminal domain"/>
    <property type="match status" value="1"/>
</dbReference>
<dbReference type="Gene3D" id="3.60.70.12">
    <property type="entry name" value="L-amino peptidase D-ALA esterase/amidase"/>
    <property type="match status" value="1"/>
</dbReference>
<dbReference type="HAMAP" id="MF_01106">
    <property type="entry name" value="ArgJ"/>
    <property type="match status" value="1"/>
</dbReference>
<dbReference type="InterPro" id="IPR002813">
    <property type="entry name" value="Arg_biosynth_ArgJ"/>
</dbReference>
<dbReference type="InterPro" id="IPR016117">
    <property type="entry name" value="ArgJ-like_dom_sf"/>
</dbReference>
<dbReference type="InterPro" id="IPR042195">
    <property type="entry name" value="ArgJ_beta_C"/>
</dbReference>
<dbReference type="NCBIfam" id="TIGR00120">
    <property type="entry name" value="ArgJ"/>
    <property type="match status" value="1"/>
</dbReference>
<dbReference type="NCBIfam" id="NF003802">
    <property type="entry name" value="PRK05388.1"/>
    <property type="match status" value="1"/>
</dbReference>
<dbReference type="PANTHER" id="PTHR23100">
    <property type="entry name" value="ARGININE BIOSYNTHESIS BIFUNCTIONAL PROTEIN ARGJ"/>
    <property type="match status" value="1"/>
</dbReference>
<dbReference type="PANTHER" id="PTHR23100:SF0">
    <property type="entry name" value="ARGININE BIOSYNTHESIS BIFUNCTIONAL PROTEIN ARGJ, MITOCHONDRIAL"/>
    <property type="match status" value="1"/>
</dbReference>
<dbReference type="Pfam" id="PF01960">
    <property type="entry name" value="ArgJ"/>
    <property type="match status" value="1"/>
</dbReference>
<dbReference type="SUPFAM" id="SSF56266">
    <property type="entry name" value="DmpA/ArgJ-like"/>
    <property type="match status" value="1"/>
</dbReference>
<evidence type="ECO:0000255" key="1">
    <source>
        <dbReference type="HAMAP-Rule" id="MF_01106"/>
    </source>
</evidence>
<comment type="function">
    <text evidence="1">Catalyzes two activities which are involved in the cyclic version of arginine biosynthesis: the synthesis of N-acetylglutamate from glutamate and acetyl-CoA as the acetyl donor, and of ornithine by transacetylation between N(2)-acetylornithine and glutamate.</text>
</comment>
<comment type="catalytic activity">
    <reaction evidence="1">
        <text>N(2)-acetyl-L-ornithine + L-glutamate = N-acetyl-L-glutamate + L-ornithine</text>
        <dbReference type="Rhea" id="RHEA:15349"/>
        <dbReference type="ChEBI" id="CHEBI:29985"/>
        <dbReference type="ChEBI" id="CHEBI:44337"/>
        <dbReference type="ChEBI" id="CHEBI:46911"/>
        <dbReference type="ChEBI" id="CHEBI:57805"/>
        <dbReference type="EC" id="2.3.1.35"/>
    </reaction>
</comment>
<comment type="catalytic activity">
    <reaction evidence="1">
        <text>L-glutamate + acetyl-CoA = N-acetyl-L-glutamate + CoA + H(+)</text>
        <dbReference type="Rhea" id="RHEA:24292"/>
        <dbReference type="ChEBI" id="CHEBI:15378"/>
        <dbReference type="ChEBI" id="CHEBI:29985"/>
        <dbReference type="ChEBI" id="CHEBI:44337"/>
        <dbReference type="ChEBI" id="CHEBI:57287"/>
        <dbReference type="ChEBI" id="CHEBI:57288"/>
        <dbReference type="EC" id="2.3.1.1"/>
    </reaction>
</comment>
<comment type="pathway">
    <text evidence="1">Amino-acid biosynthesis; L-arginine biosynthesis; L-ornithine and N-acetyl-L-glutamate from L-glutamate and N(2)-acetyl-L-ornithine (cyclic): step 1/1.</text>
</comment>
<comment type="pathway">
    <text evidence="1">Amino-acid biosynthesis; L-arginine biosynthesis; N(2)-acetyl-L-ornithine from L-glutamate: step 1/4.</text>
</comment>
<comment type="subunit">
    <text evidence="1">Heterotetramer of two alpha and two beta chains.</text>
</comment>
<comment type="subcellular location">
    <subcellularLocation>
        <location evidence="1">Cytoplasm</location>
    </subcellularLocation>
</comment>
<comment type="similarity">
    <text evidence="1">Belongs to the ArgJ family.</text>
</comment>
<protein>
    <recommendedName>
        <fullName evidence="1">Arginine biosynthesis bifunctional protein ArgJ</fullName>
    </recommendedName>
    <domain>
        <recommendedName>
            <fullName evidence="1">Glutamate N-acetyltransferase</fullName>
            <ecNumber evidence="1">2.3.1.35</ecNumber>
        </recommendedName>
        <alternativeName>
            <fullName evidence="1">Ornithine acetyltransferase</fullName>
            <shortName evidence="1">OATase</shortName>
        </alternativeName>
        <alternativeName>
            <fullName evidence="1">Ornithine transacetylase</fullName>
        </alternativeName>
    </domain>
    <domain>
        <recommendedName>
            <fullName evidence="1">Amino-acid acetyltransferase</fullName>
            <ecNumber evidence="1">2.3.1.1</ecNumber>
        </recommendedName>
        <alternativeName>
            <fullName evidence="1">N-acetylglutamate synthase</fullName>
            <shortName evidence="1">AGSase</shortName>
        </alternativeName>
    </domain>
    <component>
        <recommendedName>
            <fullName evidence="1">Arginine biosynthesis bifunctional protein ArgJ alpha chain</fullName>
        </recommendedName>
    </component>
    <component>
        <recommendedName>
            <fullName evidence="1">Arginine biosynthesis bifunctional protein ArgJ beta chain</fullName>
        </recommendedName>
    </component>
</protein>
<feature type="chain" id="PRO_0000002179" description="Arginine biosynthesis bifunctional protein ArgJ alpha chain" evidence="1">
    <location>
        <begin position="1"/>
        <end position="178"/>
    </location>
</feature>
<feature type="chain" id="PRO_0000002180" description="Arginine biosynthesis bifunctional protein ArgJ beta chain" evidence="1">
    <location>
        <begin position="179"/>
        <end position="385"/>
    </location>
</feature>
<feature type="active site" description="Nucleophile" evidence="1">
    <location>
        <position position="179"/>
    </location>
</feature>
<feature type="binding site" evidence="1">
    <location>
        <position position="142"/>
    </location>
    <ligand>
        <name>substrate</name>
    </ligand>
</feature>
<feature type="binding site" evidence="1">
    <location>
        <position position="168"/>
    </location>
    <ligand>
        <name>substrate</name>
    </ligand>
</feature>
<feature type="binding site" evidence="1">
    <location>
        <position position="179"/>
    </location>
    <ligand>
        <name>substrate</name>
    </ligand>
</feature>
<feature type="binding site" evidence="1">
    <location>
        <position position="259"/>
    </location>
    <ligand>
        <name>substrate</name>
    </ligand>
</feature>
<feature type="binding site" evidence="1">
    <location>
        <position position="380"/>
    </location>
    <ligand>
        <name>substrate</name>
    </ligand>
</feature>
<feature type="binding site" evidence="1">
    <location>
        <position position="385"/>
    </location>
    <ligand>
        <name>substrate</name>
    </ligand>
</feature>
<feature type="site" description="Involved in the stabilization of negative charge on the oxyanion by the formation of the oxyanion hole" evidence="1">
    <location>
        <position position="105"/>
    </location>
</feature>
<feature type="site" description="Involved in the stabilization of negative charge on the oxyanion by the formation of the oxyanion hole" evidence="1">
    <location>
        <position position="106"/>
    </location>
</feature>
<feature type="site" description="Cleavage; by autolysis" evidence="1">
    <location>
        <begin position="178"/>
        <end position="179"/>
    </location>
</feature>
<accession>P62062</accession>
<proteinExistence type="inferred from homology"/>
<gene>
    <name evidence="1" type="primary">argJ</name>
    <name type="ordered locus">LIC_13271</name>
</gene>
<keyword id="KW-0012">Acyltransferase</keyword>
<keyword id="KW-0028">Amino-acid biosynthesis</keyword>
<keyword id="KW-0055">Arginine biosynthesis</keyword>
<keyword id="KW-0068">Autocatalytic cleavage</keyword>
<keyword id="KW-0963">Cytoplasm</keyword>
<keyword id="KW-0511">Multifunctional enzyme</keyword>
<keyword id="KW-0808">Transferase</keyword>
<sequence length="385" mass="41503">MHMPKGFLSFGINIGIKDDTKDFGVIYSEIPCKATAVFTKNNFPGAPVIVGKEHVRSGVLQAIVINSKNSNVATGEKGIQNSREICKIIGESLDIKETLVLPSSTGVIGVPLKMEIILPACKKAKSLLKPGNLEEVAEAIMTTDTRKKISSRNIKTKSGQGTIYGIAKGAGMIEPNMATMLCYILSDVSLPEGTDLYSILKSSVDQSFNCLTIDSDTSTSDTVALLCNGLSGESSVQDFSKALTEICIDLTKLIATDGEGATKLIELTISGAKSEAQARKIGKSILNSPLVKTAIYGGDPNWGRLIMAVGKVFDEPIPFEGLQIYFGTLPVKEANPETLKKLSEYLKNNTEISLNVVLNVGTISMKFWGCDFTEKYIEENAYYTT</sequence>